<name>AES_SALA4</name>
<gene>
    <name evidence="2" type="primary">aes</name>
    <name type="ordered locus">SeAg_B0536</name>
</gene>
<accession>B5EXN3</accession>
<evidence type="ECO:0000250" key="1">
    <source>
        <dbReference type="UniProtKB" id="Q5NUF3"/>
    </source>
</evidence>
<evidence type="ECO:0000255" key="2">
    <source>
        <dbReference type="HAMAP-Rule" id="MF_01958"/>
    </source>
</evidence>
<organism>
    <name type="scientific">Salmonella agona (strain SL483)</name>
    <dbReference type="NCBI Taxonomy" id="454166"/>
    <lineage>
        <taxon>Bacteria</taxon>
        <taxon>Pseudomonadati</taxon>
        <taxon>Pseudomonadota</taxon>
        <taxon>Gammaproteobacteria</taxon>
        <taxon>Enterobacterales</taxon>
        <taxon>Enterobacteriaceae</taxon>
        <taxon>Salmonella</taxon>
    </lineage>
</organism>
<proteinExistence type="inferred from homology"/>
<comment type="function">
    <text evidence="2">Displays esterase activity towards short chain fatty esters (acyl chain length of up to 8 carbons). Able to hydrolyze triacetylglycerol (triacetin) and tributyrylglycerol (tributyrin), but not trioleylglycerol (triolein) or cholesterol oleate. Negatively regulates MalT activity by antagonizing maltotriose binding. Inhibits MelA galactosidase activity.</text>
</comment>
<comment type="subunit">
    <text evidence="2">Homodimer. Interacts with MalT and MelA.</text>
</comment>
<comment type="subcellular location">
    <subcellularLocation>
        <location evidence="2">Cytoplasm</location>
    </subcellularLocation>
</comment>
<comment type="similarity">
    <text evidence="2">Belongs to the 'GDXG' lipolytic enzyme family.</text>
</comment>
<feature type="chain" id="PRO_1000188990" description="Acetyl esterase">
    <location>
        <begin position="1"/>
        <end position="323"/>
    </location>
</feature>
<feature type="short sequence motif" description="Involved in the stabilization of the negatively charged intermediate by the formation of the oxyanion hole" evidence="1">
    <location>
        <begin position="91"/>
        <end position="93"/>
    </location>
</feature>
<feature type="active site" evidence="2">
    <location>
        <position position="165"/>
    </location>
</feature>
<feature type="active site" evidence="2">
    <location>
        <position position="262"/>
    </location>
</feature>
<feature type="active site" evidence="2">
    <location>
        <position position="292"/>
    </location>
</feature>
<keyword id="KW-0963">Cytoplasm</keyword>
<keyword id="KW-0378">Hydrolase</keyword>
<keyword id="KW-0719">Serine esterase</keyword>
<sequence>MKPENKIPVLTRLSDEMKAVVNFQQPGLPPWPADGDIETQRQYYLLERRFWNADAPSMTTRTCAVPTPYGDVTTRLYSPQPTSQATLYYLHGGGFILGNLDTHDRIMRLLARYTGCTVIGIDYSLSPQARYPQAIEETVAVCSYFSQHADEYSLNVEKIGFAGDSAGAMLALASALWLRDKHIRCGNVIAILLWYGLYGLQDSVSRRLFGGAWDGLTREDLDMYEKAYLRNEDDRESPWYCLFNNDLTRDVPPCFIASAEFDPLIDDSRLLHQTLQAHQQPCEYKMYPGTLHAFLHYSRMMTIADDALQDGARFFMARMKTPR</sequence>
<dbReference type="EC" id="3.1.1.-" evidence="2"/>
<dbReference type="EMBL" id="CP001138">
    <property type="protein sequence ID" value="ACH49761.1"/>
    <property type="molecule type" value="Genomic_DNA"/>
</dbReference>
<dbReference type="RefSeq" id="WP_000801780.1">
    <property type="nucleotide sequence ID" value="NC_011149.1"/>
</dbReference>
<dbReference type="SMR" id="B5EXN3"/>
<dbReference type="ESTHER" id="salty-AES">
    <property type="family name" value="Acetyl_esterase"/>
</dbReference>
<dbReference type="MEROPS" id="S09.A47"/>
<dbReference type="KEGG" id="sea:SeAg_B0536"/>
<dbReference type="HOGENOM" id="CLU_012494_6_4_6"/>
<dbReference type="Proteomes" id="UP000008819">
    <property type="component" value="Chromosome"/>
</dbReference>
<dbReference type="GO" id="GO:0005737">
    <property type="term" value="C:cytoplasm"/>
    <property type="evidence" value="ECO:0007669"/>
    <property type="project" value="UniProtKB-SubCell"/>
</dbReference>
<dbReference type="GO" id="GO:0052689">
    <property type="term" value="F:carboxylic ester hydrolase activity"/>
    <property type="evidence" value="ECO:0007669"/>
    <property type="project" value="UniProtKB-UniRule"/>
</dbReference>
<dbReference type="FunFam" id="3.40.50.1820:FF:000035">
    <property type="entry name" value="Acetyl esterase"/>
    <property type="match status" value="1"/>
</dbReference>
<dbReference type="Gene3D" id="3.40.50.1820">
    <property type="entry name" value="alpha/beta hydrolase"/>
    <property type="match status" value="1"/>
</dbReference>
<dbReference type="HAMAP" id="MF_01958">
    <property type="entry name" value="Acetyl_esterase"/>
    <property type="match status" value="1"/>
</dbReference>
<dbReference type="InterPro" id="IPR013094">
    <property type="entry name" value="AB_hydrolase_3"/>
</dbReference>
<dbReference type="InterPro" id="IPR029058">
    <property type="entry name" value="AB_hydrolase_fold"/>
</dbReference>
<dbReference type="InterPro" id="IPR023508">
    <property type="entry name" value="Acetyl_esterase"/>
</dbReference>
<dbReference type="InterPro" id="IPR050300">
    <property type="entry name" value="GDXG_lipolytic_enzyme"/>
</dbReference>
<dbReference type="InterPro" id="IPR033140">
    <property type="entry name" value="Lipase_GDXG_put_SER_AS"/>
</dbReference>
<dbReference type="NCBIfam" id="NF007547">
    <property type="entry name" value="PRK10162.1"/>
    <property type="match status" value="1"/>
</dbReference>
<dbReference type="PANTHER" id="PTHR48081">
    <property type="entry name" value="AB HYDROLASE SUPERFAMILY PROTEIN C4A8.06C"/>
    <property type="match status" value="1"/>
</dbReference>
<dbReference type="PANTHER" id="PTHR48081:SF8">
    <property type="entry name" value="ALPHA_BETA HYDROLASE FOLD-3 DOMAIN-CONTAINING PROTEIN-RELATED"/>
    <property type="match status" value="1"/>
</dbReference>
<dbReference type="Pfam" id="PF07859">
    <property type="entry name" value="Abhydrolase_3"/>
    <property type="match status" value="1"/>
</dbReference>
<dbReference type="SUPFAM" id="SSF53474">
    <property type="entry name" value="alpha/beta-Hydrolases"/>
    <property type="match status" value="1"/>
</dbReference>
<dbReference type="PROSITE" id="PS01174">
    <property type="entry name" value="LIPASE_GDXG_SER"/>
    <property type="match status" value="1"/>
</dbReference>
<reference key="1">
    <citation type="journal article" date="2011" name="J. Bacteriol.">
        <title>Comparative genomics of 28 Salmonella enterica isolates: evidence for CRISPR-mediated adaptive sublineage evolution.</title>
        <authorList>
            <person name="Fricke W.F."/>
            <person name="Mammel M.K."/>
            <person name="McDermott P.F."/>
            <person name="Tartera C."/>
            <person name="White D.G."/>
            <person name="Leclerc J.E."/>
            <person name="Ravel J."/>
            <person name="Cebula T.A."/>
        </authorList>
    </citation>
    <scope>NUCLEOTIDE SEQUENCE [LARGE SCALE GENOMIC DNA]</scope>
    <source>
        <strain>SL483</strain>
    </source>
</reference>
<protein>
    <recommendedName>
        <fullName evidence="2">Acetyl esterase</fullName>
        <ecNumber evidence="2">3.1.1.-</ecNumber>
    </recommendedName>
</protein>